<organism>
    <name type="scientific">Clostridium botulinum (strain Langeland / NCTC 10281 / Type F)</name>
    <dbReference type="NCBI Taxonomy" id="441772"/>
    <lineage>
        <taxon>Bacteria</taxon>
        <taxon>Bacillati</taxon>
        <taxon>Bacillota</taxon>
        <taxon>Clostridia</taxon>
        <taxon>Eubacteriales</taxon>
        <taxon>Clostridiaceae</taxon>
        <taxon>Clostridium</taxon>
    </lineage>
</organism>
<feature type="chain" id="PRO_0000332803" description="Cysteine--tRNA ligase">
    <location>
        <begin position="1"/>
        <end position="465"/>
    </location>
</feature>
<feature type="short sequence motif" description="'HIGH' region">
    <location>
        <begin position="29"/>
        <end position="39"/>
    </location>
</feature>
<feature type="short sequence motif" description="'KMSKS' region">
    <location>
        <begin position="264"/>
        <end position="268"/>
    </location>
</feature>
<feature type="binding site" evidence="1">
    <location>
        <position position="27"/>
    </location>
    <ligand>
        <name>Zn(2+)</name>
        <dbReference type="ChEBI" id="CHEBI:29105"/>
    </ligand>
</feature>
<feature type="binding site" evidence="1">
    <location>
        <position position="207"/>
    </location>
    <ligand>
        <name>Zn(2+)</name>
        <dbReference type="ChEBI" id="CHEBI:29105"/>
    </ligand>
</feature>
<feature type="binding site" evidence="1">
    <location>
        <position position="232"/>
    </location>
    <ligand>
        <name>Zn(2+)</name>
        <dbReference type="ChEBI" id="CHEBI:29105"/>
    </ligand>
</feature>
<feature type="binding site" evidence="1">
    <location>
        <position position="236"/>
    </location>
    <ligand>
        <name>Zn(2+)</name>
        <dbReference type="ChEBI" id="CHEBI:29105"/>
    </ligand>
</feature>
<feature type="binding site" evidence="1">
    <location>
        <position position="267"/>
    </location>
    <ligand>
        <name>ATP</name>
        <dbReference type="ChEBI" id="CHEBI:30616"/>
    </ligand>
</feature>
<comment type="catalytic activity">
    <reaction evidence="1">
        <text>tRNA(Cys) + L-cysteine + ATP = L-cysteinyl-tRNA(Cys) + AMP + diphosphate</text>
        <dbReference type="Rhea" id="RHEA:17773"/>
        <dbReference type="Rhea" id="RHEA-COMP:9661"/>
        <dbReference type="Rhea" id="RHEA-COMP:9679"/>
        <dbReference type="ChEBI" id="CHEBI:30616"/>
        <dbReference type="ChEBI" id="CHEBI:33019"/>
        <dbReference type="ChEBI" id="CHEBI:35235"/>
        <dbReference type="ChEBI" id="CHEBI:78442"/>
        <dbReference type="ChEBI" id="CHEBI:78517"/>
        <dbReference type="ChEBI" id="CHEBI:456215"/>
        <dbReference type="EC" id="6.1.1.16"/>
    </reaction>
</comment>
<comment type="cofactor">
    <cofactor evidence="1">
        <name>Zn(2+)</name>
        <dbReference type="ChEBI" id="CHEBI:29105"/>
    </cofactor>
    <text evidence="1">Binds 1 zinc ion per subunit.</text>
</comment>
<comment type="subunit">
    <text evidence="1">Monomer.</text>
</comment>
<comment type="subcellular location">
    <subcellularLocation>
        <location evidence="1">Cytoplasm</location>
    </subcellularLocation>
</comment>
<comment type="similarity">
    <text evidence="1">Belongs to the class-I aminoacyl-tRNA synthetase family.</text>
</comment>
<name>SYC_CLOBL</name>
<accession>A7GJ96</accession>
<protein>
    <recommendedName>
        <fullName evidence="1">Cysteine--tRNA ligase</fullName>
        <ecNumber evidence="1">6.1.1.16</ecNumber>
    </recommendedName>
    <alternativeName>
        <fullName evidence="1">Cysteinyl-tRNA synthetase</fullName>
        <shortName evidence="1">CysRS</shortName>
    </alternativeName>
</protein>
<evidence type="ECO:0000255" key="1">
    <source>
        <dbReference type="HAMAP-Rule" id="MF_00041"/>
    </source>
</evidence>
<proteinExistence type="inferred from homology"/>
<reference key="1">
    <citation type="submission" date="2007-06" db="EMBL/GenBank/DDBJ databases">
        <authorList>
            <person name="Brinkac L.M."/>
            <person name="Daugherty S."/>
            <person name="Dodson R.J."/>
            <person name="Madupu R."/>
            <person name="Brown J.L."/>
            <person name="Bruce D."/>
            <person name="Detter C."/>
            <person name="Munk C."/>
            <person name="Smith L.A."/>
            <person name="Smith T.J."/>
            <person name="White O."/>
            <person name="Brettin T.S."/>
        </authorList>
    </citation>
    <scope>NUCLEOTIDE SEQUENCE [LARGE SCALE GENOMIC DNA]</scope>
    <source>
        <strain>Langeland / NCTC 10281 / Type F</strain>
    </source>
</reference>
<gene>
    <name evidence="1" type="primary">cysS</name>
    <name type="ordered locus">CLI_3688</name>
</gene>
<sequence length="465" mass="54329">MKVYNTLTNKKEEFLTLVPGEVKMYVCGPTVYNFFHIGNARTFVVFDTIRRYLEYRGYKVKFIQNFTDIDDKMIKRANEEGSTVKELGDRFIKEYYKDADDLNIERATKNPRATEFMEEIIKFVSDLIEKGYAYEIDGDVYFSTKKFNSYGKLSGQNLEELQLGARINIDERKKDPMDFAIWKSQKPGEPAWESPWGMGRPGWHIECSCMAYNLLGETIDIHAGGSDLSFPHHENEIAQSEARTGKQFAKYWLHSAFVNVNNQKMSKSLNNFFTAREILEKYDADVLRMFMLSGHYRTQINFSMELLDSTKAALDRLYNSINNLENLLDEVKNEELRDEELEYKNELQKYKEKYIEKMDDDFNTADAISVIFDLIRDVNTNVTIESSKELVKYTLDLIRELGNPLGILQESTKASLEEEIEKLIEERQKARKEKNWALADKIRDNLKERGIVLEDTPQGVRWKQI</sequence>
<keyword id="KW-0030">Aminoacyl-tRNA synthetase</keyword>
<keyword id="KW-0067">ATP-binding</keyword>
<keyword id="KW-0963">Cytoplasm</keyword>
<keyword id="KW-0436">Ligase</keyword>
<keyword id="KW-0479">Metal-binding</keyword>
<keyword id="KW-0547">Nucleotide-binding</keyword>
<keyword id="KW-0648">Protein biosynthesis</keyword>
<keyword id="KW-0862">Zinc</keyword>
<dbReference type="EC" id="6.1.1.16" evidence="1"/>
<dbReference type="EMBL" id="CP000728">
    <property type="protein sequence ID" value="ABS41789.1"/>
    <property type="molecule type" value="Genomic_DNA"/>
</dbReference>
<dbReference type="RefSeq" id="WP_012101141.1">
    <property type="nucleotide sequence ID" value="NC_009699.1"/>
</dbReference>
<dbReference type="SMR" id="A7GJ96"/>
<dbReference type="KEGG" id="cbf:CLI_3688"/>
<dbReference type="HOGENOM" id="CLU_013528_0_1_9"/>
<dbReference type="Proteomes" id="UP000002410">
    <property type="component" value="Chromosome"/>
</dbReference>
<dbReference type="GO" id="GO:0005829">
    <property type="term" value="C:cytosol"/>
    <property type="evidence" value="ECO:0007669"/>
    <property type="project" value="TreeGrafter"/>
</dbReference>
<dbReference type="GO" id="GO:0005524">
    <property type="term" value="F:ATP binding"/>
    <property type="evidence" value="ECO:0007669"/>
    <property type="project" value="UniProtKB-UniRule"/>
</dbReference>
<dbReference type="GO" id="GO:0004817">
    <property type="term" value="F:cysteine-tRNA ligase activity"/>
    <property type="evidence" value="ECO:0007669"/>
    <property type="project" value="UniProtKB-UniRule"/>
</dbReference>
<dbReference type="GO" id="GO:0008270">
    <property type="term" value="F:zinc ion binding"/>
    <property type="evidence" value="ECO:0007669"/>
    <property type="project" value="UniProtKB-UniRule"/>
</dbReference>
<dbReference type="GO" id="GO:0006423">
    <property type="term" value="P:cysteinyl-tRNA aminoacylation"/>
    <property type="evidence" value="ECO:0007669"/>
    <property type="project" value="UniProtKB-UniRule"/>
</dbReference>
<dbReference type="CDD" id="cd00672">
    <property type="entry name" value="CysRS_core"/>
    <property type="match status" value="1"/>
</dbReference>
<dbReference type="FunFam" id="3.40.50.620:FF:000009">
    <property type="entry name" value="Cysteine--tRNA ligase"/>
    <property type="match status" value="1"/>
</dbReference>
<dbReference type="Gene3D" id="1.20.120.1910">
    <property type="entry name" value="Cysteine-tRNA ligase, C-terminal anti-codon recognition domain"/>
    <property type="match status" value="1"/>
</dbReference>
<dbReference type="Gene3D" id="3.40.50.620">
    <property type="entry name" value="HUPs"/>
    <property type="match status" value="1"/>
</dbReference>
<dbReference type="HAMAP" id="MF_00041">
    <property type="entry name" value="Cys_tRNA_synth"/>
    <property type="match status" value="1"/>
</dbReference>
<dbReference type="InterPro" id="IPR015803">
    <property type="entry name" value="Cys-tRNA-ligase"/>
</dbReference>
<dbReference type="InterPro" id="IPR015273">
    <property type="entry name" value="Cys-tRNA-synt_Ia_DALR"/>
</dbReference>
<dbReference type="InterPro" id="IPR024909">
    <property type="entry name" value="Cys-tRNA/MSH_ligase"/>
</dbReference>
<dbReference type="InterPro" id="IPR056411">
    <property type="entry name" value="CysS_C"/>
</dbReference>
<dbReference type="InterPro" id="IPR014729">
    <property type="entry name" value="Rossmann-like_a/b/a_fold"/>
</dbReference>
<dbReference type="InterPro" id="IPR032678">
    <property type="entry name" value="tRNA-synt_1_cat_dom"/>
</dbReference>
<dbReference type="InterPro" id="IPR009080">
    <property type="entry name" value="tRNAsynth_Ia_anticodon-bd"/>
</dbReference>
<dbReference type="NCBIfam" id="TIGR00435">
    <property type="entry name" value="cysS"/>
    <property type="match status" value="1"/>
</dbReference>
<dbReference type="PANTHER" id="PTHR10890:SF3">
    <property type="entry name" value="CYSTEINE--TRNA LIGASE, CYTOPLASMIC"/>
    <property type="match status" value="1"/>
</dbReference>
<dbReference type="PANTHER" id="PTHR10890">
    <property type="entry name" value="CYSTEINYL-TRNA SYNTHETASE"/>
    <property type="match status" value="1"/>
</dbReference>
<dbReference type="Pfam" id="PF23493">
    <property type="entry name" value="CysS_C"/>
    <property type="match status" value="1"/>
</dbReference>
<dbReference type="Pfam" id="PF09190">
    <property type="entry name" value="DALR_2"/>
    <property type="match status" value="1"/>
</dbReference>
<dbReference type="Pfam" id="PF01406">
    <property type="entry name" value="tRNA-synt_1e"/>
    <property type="match status" value="1"/>
</dbReference>
<dbReference type="PRINTS" id="PR00983">
    <property type="entry name" value="TRNASYNTHCYS"/>
</dbReference>
<dbReference type="SMART" id="SM00840">
    <property type="entry name" value="DALR_2"/>
    <property type="match status" value="1"/>
</dbReference>
<dbReference type="SUPFAM" id="SSF47323">
    <property type="entry name" value="Anticodon-binding domain of a subclass of class I aminoacyl-tRNA synthetases"/>
    <property type="match status" value="1"/>
</dbReference>
<dbReference type="SUPFAM" id="SSF52374">
    <property type="entry name" value="Nucleotidylyl transferase"/>
    <property type="match status" value="1"/>
</dbReference>